<protein>
    <recommendedName>
        <fullName evidence="1">Phosphate acyltransferase</fullName>
        <ecNumber evidence="1">2.3.1.274</ecNumber>
    </recommendedName>
    <alternativeName>
        <fullName evidence="1">Acyl-ACP phosphotransacylase</fullName>
    </alternativeName>
    <alternativeName>
        <fullName evidence="1">Acyl-[acyl-carrier-protein]--phosphate acyltransferase</fullName>
    </alternativeName>
    <alternativeName>
        <fullName evidence="1">Phosphate-acyl-ACP acyltransferase</fullName>
    </alternativeName>
</protein>
<comment type="function">
    <text evidence="1">Catalyzes the reversible formation of acyl-phosphate (acyl-PO(4)) from acyl-[acyl-carrier-protein] (acyl-ACP). This enzyme utilizes acyl-ACP as fatty acyl donor, but not acyl-CoA.</text>
</comment>
<comment type="catalytic activity">
    <reaction evidence="1">
        <text>a fatty acyl-[ACP] + phosphate = an acyl phosphate + holo-[ACP]</text>
        <dbReference type="Rhea" id="RHEA:42292"/>
        <dbReference type="Rhea" id="RHEA-COMP:9685"/>
        <dbReference type="Rhea" id="RHEA-COMP:14125"/>
        <dbReference type="ChEBI" id="CHEBI:43474"/>
        <dbReference type="ChEBI" id="CHEBI:59918"/>
        <dbReference type="ChEBI" id="CHEBI:64479"/>
        <dbReference type="ChEBI" id="CHEBI:138651"/>
        <dbReference type="EC" id="2.3.1.274"/>
    </reaction>
</comment>
<comment type="pathway">
    <text evidence="1">Lipid metabolism; phospholipid metabolism.</text>
</comment>
<comment type="subunit">
    <text evidence="1">Homodimer. Probably interacts with PlsY.</text>
</comment>
<comment type="subcellular location">
    <subcellularLocation>
        <location evidence="1">Cytoplasm</location>
    </subcellularLocation>
    <text evidence="1">Associated with the membrane possibly through PlsY.</text>
</comment>
<comment type="similarity">
    <text evidence="1">Belongs to the PlsX family.</text>
</comment>
<comment type="sequence caution" evidence="2">
    <conflict type="erroneous initiation">
        <sequence resource="EMBL-CDS" id="AAG55836"/>
    </conflict>
</comment>
<comment type="sequence caution" evidence="2">
    <conflict type="erroneous initiation">
        <sequence resource="EMBL-CDS" id="BAB34891"/>
    </conflict>
</comment>
<proteinExistence type="inferred from homology"/>
<sequence length="356" mass="38224">MTRLTLALDVMGGDFGPSVTVPAALQALNSNSQLTLLLVGNPDAITPLLAKADFEQRSRLQIIPAQSVIASDARPSQAIRASRGSSMRVALELVKEGRAQACVSAGNTGALMGLAKLLLKPLEGIERPALVTVLPHQQKGKTVVLDLGANVDCDSTMLVQFAIMGSVLAEEVVEIPNPRVALLNIGEEEVKGLDSIRDASAVLKTIPSINYIGYLEANELLTGKTDVLVCDGFTGNVTLKTMEGVVRMFLSLLKSQGEGKKRSWWLLLLKRWLQKSLTRRFSHLNPDQYNGACLLGLRGTVIKSHGAANQRAFAVAIEQAVQAVQRQVPQRIAARLESVYPAGFELLDGGKSGTLR</sequence>
<evidence type="ECO:0000255" key="1">
    <source>
        <dbReference type="HAMAP-Rule" id="MF_00019"/>
    </source>
</evidence>
<evidence type="ECO:0000305" key="2"/>
<feature type="chain" id="PRO_0000189877" description="Phosphate acyltransferase">
    <location>
        <begin position="1"/>
        <end position="356"/>
    </location>
</feature>
<dbReference type="EC" id="2.3.1.274" evidence="1"/>
<dbReference type="EMBL" id="AE005174">
    <property type="protein sequence ID" value="AAG55836.1"/>
    <property type="status" value="ALT_INIT"/>
    <property type="molecule type" value="Genomic_DNA"/>
</dbReference>
<dbReference type="EMBL" id="BA000007">
    <property type="protein sequence ID" value="BAB34891.1"/>
    <property type="status" value="ALT_INIT"/>
    <property type="molecule type" value="Genomic_DNA"/>
</dbReference>
<dbReference type="PIR" id="D90812">
    <property type="entry name" value="D90812"/>
</dbReference>
<dbReference type="PIR" id="H85671">
    <property type="entry name" value="H85671"/>
</dbReference>
<dbReference type="RefSeq" id="NP_309495.2">
    <property type="nucleotide sequence ID" value="NC_002695.1"/>
</dbReference>
<dbReference type="RefSeq" id="WP_000197578.1">
    <property type="nucleotide sequence ID" value="NZ_VOAI01000018.1"/>
</dbReference>
<dbReference type="SMR" id="P65737"/>
<dbReference type="STRING" id="155864.Z1729"/>
<dbReference type="GeneID" id="913798"/>
<dbReference type="GeneID" id="93776318"/>
<dbReference type="KEGG" id="ece:Z1729"/>
<dbReference type="KEGG" id="ecs:ECs_1468"/>
<dbReference type="PATRIC" id="fig|386585.9.peg.1568"/>
<dbReference type="eggNOG" id="COG0416">
    <property type="taxonomic scope" value="Bacteria"/>
</dbReference>
<dbReference type="HOGENOM" id="CLU_039379_1_0_6"/>
<dbReference type="OMA" id="HGKSNAR"/>
<dbReference type="UniPathway" id="UPA00085"/>
<dbReference type="Proteomes" id="UP000000558">
    <property type="component" value="Chromosome"/>
</dbReference>
<dbReference type="Proteomes" id="UP000002519">
    <property type="component" value="Chromosome"/>
</dbReference>
<dbReference type="GO" id="GO:0005737">
    <property type="term" value="C:cytoplasm"/>
    <property type="evidence" value="ECO:0007669"/>
    <property type="project" value="UniProtKB-SubCell"/>
</dbReference>
<dbReference type="GO" id="GO:0043811">
    <property type="term" value="F:phosphate:acyl-[acyl carrier protein] acyltransferase activity"/>
    <property type="evidence" value="ECO:0007669"/>
    <property type="project" value="UniProtKB-UniRule"/>
</dbReference>
<dbReference type="GO" id="GO:0006633">
    <property type="term" value="P:fatty acid biosynthetic process"/>
    <property type="evidence" value="ECO:0007669"/>
    <property type="project" value="UniProtKB-UniRule"/>
</dbReference>
<dbReference type="GO" id="GO:0008654">
    <property type="term" value="P:phospholipid biosynthetic process"/>
    <property type="evidence" value="ECO:0007669"/>
    <property type="project" value="UniProtKB-KW"/>
</dbReference>
<dbReference type="FunFam" id="3.40.718.10:FF:000008">
    <property type="entry name" value="Phosphate acyltransferase"/>
    <property type="match status" value="1"/>
</dbReference>
<dbReference type="Gene3D" id="3.40.718.10">
    <property type="entry name" value="Isopropylmalate Dehydrogenase"/>
    <property type="match status" value="1"/>
</dbReference>
<dbReference type="HAMAP" id="MF_00019">
    <property type="entry name" value="PlsX"/>
    <property type="match status" value="1"/>
</dbReference>
<dbReference type="InterPro" id="IPR003664">
    <property type="entry name" value="FA_synthesis"/>
</dbReference>
<dbReference type="InterPro" id="IPR012281">
    <property type="entry name" value="Phospholipid_synth_PlsX-like"/>
</dbReference>
<dbReference type="NCBIfam" id="TIGR00182">
    <property type="entry name" value="plsX"/>
    <property type="match status" value="1"/>
</dbReference>
<dbReference type="PANTHER" id="PTHR30100">
    <property type="entry name" value="FATTY ACID/PHOSPHOLIPID SYNTHESIS PROTEIN PLSX"/>
    <property type="match status" value="1"/>
</dbReference>
<dbReference type="PANTHER" id="PTHR30100:SF1">
    <property type="entry name" value="PHOSPHATE ACYLTRANSFERASE"/>
    <property type="match status" value="1"/>
</dbReference>
<dbReference type="Pfam" id="PF02504">
    <property type="entry name" value="FA_synthesis"/>
    <property type="match status" value="1"/>
</dbReference>
<dbReference type="PIRSF" id="PIRSF002465">
    <property type="entry name" value="Phsphlp_syn_PlsX"/>
    <property type="match status" value="1"/>
</dbReference>
<dbReference type="SUPFAM" id="SSF53659">
    <property type="entry name" value="Isocitrate/Isopropylmalate dehydrogenase-like"/>
    <property type="match status" value="1"/>
</dbReference>
<keyword id="KW-0963">Cytoplasm</keyword>
<keyword id="KW-0444">Lipid biosynthesis</keyword>
<keyword id="KW-0443">Lipid metabolism</keyword>
<keyword id="KW-0594">Phospholipid biosynthesis</keyword>
<keyword id="KW-1208">Phospholipid metabolism</keyword>
<keyword id="KW-1185">Reference proteome</keyword>
<keyword id="KW-0808">Transferase</keyword>
<gene>
    <name evidence="1" type="primary">plsX</name>
    <name type="ordered locus">Z1729</name>
    <name type="ordered locus">ECs1468</name>
</gene>
<organism>
    <name type="scientific">Escherichia coli O157:H7</name>
    <dbReference type="NCBI Taxonomy" id="83334"/>
    <lineage>
        <taxon>Bacteria</taxon>
        <taxon>Pseudomonadati</taxon>
        <taxon>Pseudomonadota</taxon>
        <taxon>Gammaproteobacteria</taxon>
        <taxon>Enterobacterales</taxon>
        <taxon>Enterobacteriaceae</taxon>
        <taxon>Escherichia</taxon>
    </lineage>
</organism>
<accession>P65737</accession>
<accession>Q8X8J0</accession>
<name>PLSX_ECO57</name>
<reference key="1">
    <citation type="journal article" date="2001" name="Nature">
        <title>Genome sequence of enterohaemorrhagic Escherichia coli O157:H7.</title>
        <authorList>
            <person name="Perna N.T."/>
            <person name="Plunkett G. III"/>
            <person name="Burland V."/>
            <person name="Mau B."/>
            <person name="Glasner J.D."/>
            <person name="Rose D.J."/>
            <person name="Mayhew G.F."/>
            <person name="Evans P.S."/>
            <person name="Gregor J."/>
            <person name="Kirkpatrick H.A."/>
            <person name="Posfai G."/>
            <person name="Hackett J."/>
            <person name="Klink S."/>
            <person name="Boutin A."/>
            <person name="Shao Y."/>
            <person name="Miller L."/>
            <person name="Grotbeck E.J."/>
            <person name="Davis N.W."/>
            <person name="Lim A."/>
            <person name="Dimalanta E.T."/>
            <person name="Potamousis K."/>
            <person name="Apodaca J."/>
            <person name="Anantharaman T.S."/>
            <person name="Lin J."/>
            <person name="Yen G."/>
            <person name="Schwartz D.C."/>
            <person name="Welch R.A."/>
            <person name="Blattner F.R."/>
        </authorList>
    </citation>
    <scope>NUCLEOTIDE SEQUENCE [LARGE SCALE GENOMIC DNA]</scope>
    <source>
        <strain>O157:H7 / EDL933 / ATCC 700927 / EHEC</strain>
    </source>
</reference>
<reference key="2">
    <citation type="journal article" date="2001" name="DNA Res.">
        <title>Complete genome sequence of enterohemorrhagic Escherichia coli O157:H7 and genomic comparison with a laboratory strain K-12.</title>
        <authorList>
            <person name="Hayashi T."/>
            <person name="Makino K."/>
            <person name="Ohnishi M."/>
            <person name="Kurokawa K."/>
            <person name="Ishii K."/>
            <person name="Yokoyama K."/>
            <person name="Han C.-G."/>
            <person name="Ohtsubo E."/>
            <person name="Nakayama K."/>
            <person name="Murata T."/>
            <person name="Tanaka M."/>
            <person name="Tobe T."/>
            <person name="Iida T."/>
            <person name="Takami H."/>
            <person name="Honda T."/>
            <person name="Sasakawa C."/>
            <person name="Ogasawara N."/>
            <person name="Yasunaga T."/>
            <person name="Kuhara S."/>
            <person name="Shiba T."/>
            <person name="Hattori M."/>
            <person name="Shinagawa H."/>
        </authorList>
    </citation>
    <scope>NUCLEOTIDE SEQUENCE [LARGE SCALE GENOMIC DNA]</scope>
    <source>
        <strain>O157:H7 / Sakai / RIMD 0509952 / EHEC</strain>
    </source>
</reference>